<feature type="chain" id="PRO_1000202261" description="Serine hydroxymethyltransferase">
    <location>
        <begin position="1"/>
        <end position="417"/>
    </location>
</feature>
<feature type="binding site" evidence="1">
    <location>
        <position position="121"/>
    </location>
    <ligand>
        <name>(6S)-5,6,7,8-tetrahydrofolate</name>
        <dbReference type="ChEBI" id="CHEBI:57453"/>
    </ligand>
</feature>
<feature type="binding site" evidence="1">
    <location>
        <begin position="125"/>
        <end position="127"/>
    </location>
    <ligand>
        <name>(6S)-5,6,7,8-tetrahydrofolate</name>
        <dbReference type="ChEBI" id="CHEBI:57453"/>
    </ligand>
</feature>
<feature type="binding site" evidence="1">
    <location>
        <begin position="355"/>
        <end position="357"/>
    </location>
    <ligand>
        <name>(6S)-5,6,7,8-tetrahydrofolate</name>
        <dbReference type="ChEBI" id="CHEBI:57453"/>
    </ligand>
</feature>
<feature type="site" description="Plays an important role in substrate specificity" evidence="1">
    <location>
        <position position="228"/>
    </location>
</feature>
<feature type="modified residue" description="N6-acetyllysine" evidence="1">
    <location>
        <position position="54"/>
    </location>
</feature>
<feature type="modified residue" description="N6-(pyridoxal phosphate)lysine" evidence="1">
    <location>
        <position position="229"/>
    </location>
</feature>
<feature type="modified residue" description="N6-acetyllysine" evidence="1">
    <location>
        <position position="250"/>
    </location>
</feature>
<feature type="modified residue" description="N6-acetyllysine" evidence="1">
    <location>
        <position position="285"/>
    </location>
</feature>
<feature type="modified residue" description="N6-acetyllysine" evidence="1">
    <location>
        <position position="354"/>
    </location>
</feature>
<feature type="modified residue" description="N6-acetyllysine" evidence="1">
    <location>
        <position position="375"/>
    </location>
</feature>
<dbReference type="EC" id="2.1.2.1" evidence="1"/>
<dbReference type="EMBL" id="CP001396">
    <property type="protein sequence ID" value="ACR65540.1"/>
    <property type="molecule type" value="Genomic_DNA"/>
</dbReference>
<dbReference type="RefSeq" id="WP_000919159.1">
    <property type="nucleotide sequence ID" value="NC_012759.1"/>
</dbReference>
<dbReference type="SMR" id="C4ZXC6"/>
<dbReference type="GeneID" id="89517346"/>
<dbReference type="KEGG" id="ebw:BWG_2315"/>
<dbReference type="HOGENOM" id="CLU_022477_2_1_6"/>
<dbReference type="UniPathway" id="UPA00193"/>
<dbReference type="UniPathway" id="UPA00288">
    <property type="reaction ID" value="UER01023"/>
</dbReference>
<dbReference type="GO" id="GO:0005829">
    <property type="term" value="C:cytosol"/>
    <property type="evidence" value="ECO:0007669"/>
    <property type="project" value="TreeGrafter"/>
</dbReference>
<dbReference type="GO" id="GO:0004372">
    <property type="term" value="F:glycine hydroxymethyltransferase activity"/>
    <property type="evidence" value="ECO:0007669"/>
    <property type="project" value="UniProtKB-UniRule"/>
</dbReference>
<dbReference type="GO" id="GO:0030170">
    <property type="term" value="F:pyridoxal phosphate binding"/>
    <property type="evidence" value="ECO:0007669"/>
    <property type="project" value="UniProtKB-UniRule"/>
</dbReference>
<dbReference type="GO" id="GO:0019264">
    <property type="term" value="P:glycine biosynthetic process from serine"/>
    <property type="evidence" value="ECO:0007669"/>
    <property type="project" value="UniProtKB-UniRule"/>
</dbReference>
<dbReference type="GO" id="GO:0035999">
    <property type="term" value="P:tetrahydrofolate interconversion"/>
    <property type="evidence" value="ECO:0007669"/>
    <property type="project" value="UniProtKB-UniRule"/>
</dbReference>
<dbReference type="CDD" id="cd00378">
    <property type="entry name" value="SHMT"/>
    <property type="match status" value="1"/>
</dbReference>
<dbReference type="FunFam" id="3.40.640.10:FF:000001">
    <property type="entry name" value="Serine hydroxymethyltransferase"/>
    <property type="match status" value="1"/>
</dbReference>
<dbReference type="FunFam" id="3.90.1150.10:FF:000003">
    <property type="entry name" value="Serine hydroxymethyltransferase"/>
    <property type="match status" value="1"/>
</dbReference>
<dbReference type="Gene3D" id="3.90.1150.10">
    <property type="entry name" value="Aspartate Aminotransferase, domain 1"/>
    <property type="match status" value="1"/>
</dbReference>
<dbReference type="Gene3D" id="3.40.640.10">
    <property type="entry name" value="Type I PLP-dependent aspartate aminotransferase-like (Major domain)"/>
    <property type="match status" value="1"/>
</dbReference>
<dbReference type="HAMAP" id="MF_00051">
    <property type="entry name" value="SHMT"/>
    <property type="match status" value="1"/>
</dbReference>
<dbReference type="InterPro" id="IPR015424">
    <property type="entry name" value="PyrdxlP-dep_Trfase"/>
</dbReference>
<dbReference type="InterPro" id="IPR015421">
    <property type="entry name" value="PyrdxlP-dep_Trfase_major"/>
</dbReference>
<dbReference type="InterPro" id="IPR015422">
    <property type="entry name" value="PyrdxlP-dep_Trfase_small"/>
</dbReference>
<dbReference type="InterPro" id="IPR001085">
    <property type="entry name" value="Ser_HO-MeTrfase"/>
</dbReference>
<dbReference type="InterPro" id="IPR049943">
    <property type="entry name" value="Ser_HO-MeTrfase-like"/>
</dbReference>
<dbReference type="InterPro" id="IPR019798">
    <property type="entry name" value="Ser_HO-MeTrfase_PLP_BS"/>
</dbReference>
<dbReference type="InterPro" id="IPR039429">
    <property type="entry name" value="SHMT-like_dom"/>
</dbReference>
<dbReference type="NCBIfam" id="NF000586">
    <property type="entry name" value="PRK00011.1"/>
    <property type="match status" value="1"/>
</dbReference>
<dbReference type="PANTHER" id="PTHR11680">
    <property type="entry name" value="SERINE HYDROXYMETHYLTRANSFERASE"/>
    <property type="match status" value="1"/>
</dbReference>
<dbReference type="PANTHER" id="PTHR11680:SF50">
    <property type="entry name" value="SERINE HYDROXYMETHYLTRANSFERASE"/>
    <property type="match status" value="1"/>
</dbReference>
<dbReference type="Pfam" id="PF00464">
    <property type="entry name" value="SHMT"/>
    <property type="match status" value="1"/>
</dbReference>
<dbReference type="PIRSF" id="PIRSF000412">
    <property type="entry name" value="SHMT"/>
    <property type="match status" value="1"/>
</dbReference>
<dbReference type="SUPFAM" id="SSF53383">
    <property type="entry name" value="PLP-dependent transferases"/>
    <property type="match status" value="1"/>
</dbReference>
<dbReference type="PROSITE" id="PS00096">
    <property type="entry name" value="SHMT"/>
    <property type="match status" value="1"/>
</dbReference>
<name>GLYA_ECOBW</name>
<gene>
    <name evidence="1" type="primary">glyA</name>
    <name type="ordered locus">BWG_2315</name>
</gene>
<evidence type="ECO:0000255" key="1">
    <source>
        <dbReference type="HAMAP-Rule" id="MF_00051"/>
    </source>
</evidence>
<accession>C4ZXC6</accession>
<comment type="function">
    <text evidence="1">Catalyzes the reversible interconversion of serine and glycine with tetrahydrofolate (THF) serving as the one-carbon carrier. This reaction serves as the major source of one-carbon groups required for the biosynthesis of purines, thymidylate, methionine, and other important biomolecules. Also exhibits THF-independent aldolase activity toward beta-hydroxyamino acids, producing glycine and aldehydes, via a retro-aldol mechanism.</text>
</comment>
<comment type="catalytic activity">
    <reaction evidence="1">
        <text>(6R)-5,10-methylene-5,6,7,8-tetrahydrofolate + glycine + H2O = (6S)-5,6,7,8-tetrahydrofolate + L-serine</text>
        <dbReference type="Rhea" id="RHEA:15481"/>
        <dbReference type="ChEBI" id="CHEBI:15377"/>
        <dbReference type="ChEBI" id="CHEBI:15636"/>
        <dbReference type="ChEBI" id="CHEBI:33384"/>
        <dbReference type="ChEBI" id="CHEBI:57305"/>
        <dbReference type="ChEBI" id="CHEBI:57453"/>
        <dbReference type="EC" id="2.1.2.1"/>
    </reaction>
</comment>
<comment type="cofactor">
    <cofactor evidence="1">
        <name>pyridoxal 5'-phosphate</name>
        <dbReference type="ChEBI" id="CHEBI:597326"/>
    </cofactor>
</comment>
<comment type="pathway">
    <text evidence="1">One-carbon metabolism; tetrahydrofolate interconversion.</text>
</comment>
<comment type="pathway">
    <text evidence="1">Amino-acid biosynthesis; glycine biosynthesis; glycine from L-serine: step 1/1.</text>
</comment>
<comment type="subunit">
    <text evidence="1">Homodimer.</text>
</comment>
<comment type="subcellular location">
    <subcellularLocation>
        <location evidence="1">Cytoplasm</location>
    </subcellularLocation>
</comment>
<comment type="similarity">
    <text evidence="1">Belongs to the SHMT family.</text>
</comment>
<protein>
    <recommendedName>
        <fullName evidence="1">Serine hydroxymethyltransferase</fullName>
        <shortName evidence="1">SHMT</shortName>
        <shortName evidence="1">Serine methylase</shortName>
        <ecNumber evidence="1">2.1.2.1</ecNumber>
    </recommendedName>
</protein>
<proteinExistence type="inferred from homology"/>
<reference key="1">
    <citation type="journal article" date="2009" name="J. Bacteriol.">
        <title>Genomic sequencing reveals regulatory mutations and recombinational events in the widely used MC4100 lineage of Escherichia coli K-12.</title>
        <authorList>
            <person name="Ferenci T."/>
            <person name="Zhou Z."/>
            <person name="Betteridge T."/>
            <person name="Ren Y."/>
            <person name="Liu Y."/>
            <person name="Feng L."/>
            <person name="Reeves P.R."/>
            <person name="Wang L."/>
        </authorList>
    </citation>
    <scope>NUCLEOTIDE SEQUENCE [LARGE SCALE GENOMIC DNA]</scope>
    <source>
        <strain>K12 / MC4100 / BW2952</strain>
    </source>
</reference>
<keyword id="KW-0007">Acetylation</keyword>
<keyword id="KW-0028">Amino-acid biosynthesis</keyword>
<keyword id="KW-0963">Cytoplasm</keyword>
<keyword id="KW-0554">One-carbon metabolism</keyword>
<keyword id="KW-0663">Pyridoxal phosphate</keyword>
<keyword id="KW-0808">Transferase</keyword>
<sequence>MLKREMNIADYDAELWQAMEQEKVRQEEHIELIASENYTSPRVMQAQGSQLTNKYAEGYPGKRYYGGCEYVDIVEQLAIDRAKELFGADYANVQPHSGSQANFAVYTALLEPGDTVLGMNLAHGGHLTHGSPVNFSGKLYNIVPYGIDATGHIDYADLEKQAKEHKPKMIIGGFSAYSGVVDWAKMREIADSIGAYLFVDMAHVAGLVAAGVYPNPVPHAHVVTTTTHKTLAGPRGGLILAKGGSEELYKKLNSAVFPGGQGGPLMHVIAGKAVALKEAMEPEFKTYQQQVAKNAKAMVEVFLERGYKVVSGGTDNHLFLVDLVDKNLTGKEADAALGRANITVNKNSVPNDPKSPFVTSGIRVGTPAITRRGFKEAEAKELAGWMCDVLDSINDEAVIERIKGKVLDICARYPVYA</sequence>
<organism>
    <name type="scientific">Escherichia coli (strain K12 / MC4100 / BW2952)</name>
    <dbReference type="NCBI Taxonomy" id="595496"/>
    <lineage>
        <taxon>Bacteria</taxon>
        <taxon>Pseudomonadati</taxon>
        <taxon>Pseudomonadota</taxon>
        <taxon>Gammaproteobacteria</taxon>
        <taxon>Enterobacterales</taxon>
        <taxon>Enterobacteriaceae</taxon>
        <taxon>Escherichia</taxon>
    </lineage>
</organism>